<keyword id="KW-0027">Amidation</keyword>
<keyword id="KW-0044">Antibiotic</keyword>
<keyword id="KW-0929">Antimicrobial</keyword>
<keyword id="KW-0903">Direct protein sequencing</keyword>
<keyword id="KW-0391">Immunity</keyword>
<keyword id="KW-0399">Innate immunity</keyword>
<keyword id="KW-0964">Secreted</keyword>
<proteinExistence type="evidence at protein level"/>
<feature type="peptide" id="PRO_0000044685" description="Sarcotoxin-1C">
    <location>
        <begin position="1"/>
        <end position="39"/>
    </location>
</feature>
<feature type="modified residue" description="Arginine amide" evidence="1">
    <location>
        <position position="39"/>
    </location>
</feature>
<comment type="function">
    <text>Sarcotoxins, which are potent bactericidal proteins, are produced in response to injury. They are cytotoxic to both Gram-positive and Gram-negative bacteria.</text>
</comment>
<comment type="subcellular location">
    <subcellularLocation>
        <location>Secreted</location>
    </subcellularLocation>
</comment>
<comment type="similarity">
    <text evidence="2">Belongs to the cecropin family.</text>
</comment>
<dbReference type="PIR" id="C22625">
    <property type="entry name" value="CKFHCS"/>
</dbReference>
<dbReference type="SMR" id="P08377"/>
<dbReference type="GO" id="GO:0005615">
    <property type="term" value="C:extracellular space"/>
    <property type="evidence" value="ECO:0007669"/>
    <property type="project" value="TreeGrafter"/>
</dbReference>
<dbReference type="GO" id="GO:0019731">
    <property type="term" value="P:antibacterial humoral response"/>
    <property type="evidence" value="ECO:0007669"/>
    <property type="project" value="InterPro"/>
</dbReference>
<dbReference type="GO" id="GO:0050829">
    <property type="term" value="P:defense response to Gram-negative bacterium"/>
    <property type="evidence" value="ECO:0007669"/>
    <property type="project" value="UniProtKB-ARBA"/>
</dbReference>
<dbReference type="GO" id="GO:0050830">
    <property type="term" value="P:defense response to Gram-positive bacterium"/>
    <property type="evidence" value="ECO:0007669"/>
    <property type="project" value="TreeGrafter"/>
</dbReference>
<dbReference type="GO" id="GO:0045087">
    <property type="term" value="P:innate immune response"/>
    <property type="evidence" value="ECO:0007669"/>
    <property type="project" value="UniProtKB-KW"/>
</dbReference>
<dbReference type="InterPro" id="IPR000875">
    <property type="entry name" value="Cecropin"/>
</dbReference>
<dbReference type="InterPro" id="IPR020400">
    <property type="entry name" value="Cecropin_insect"/>
</dbReference>
<dbReference type="PANTHER" id="PTHR38329">
    <property type="entry name" value="CECROPIN-A1-RELATED"/>
    <property type="match status" value="1"/>
</dbReference>
<dbReference type="PANTHER" id="PTHR38329:SF1">
    <property type="entry name" value="CECROPIN-A1-RELATED"/>
    <property type="match status" value="1"/>
</dbReference>
<dbReference type="Pfam" id="PF00272">
    <property type="entry name" value="Cecropin"/>
    <property type="match status" value="1"/>
</dbReference>
<dbReference type="PROSITE" id="PS00268">
    <property type="entry name" value="CECROPIN"/>
    <property type="match status" value="1"/>
</dbReference>
<evidence type="ECO:0000269" key="1">
    <source>
    </source>
</evidence>
<evidence type="ECO:0000305" key="2"/>
<sequence length="39" mass="4227">GWLRKIGKKIERVGQHTRDATIQVLGIAQQAANVAATAR</sequence>
<protein>
    <recommendedName>
        <fullName>Sarcotoxin-1C</fullName>
    </recommendedName>
    <alternativeName>
        <fullName>Sarcotoxin IC</fullName>
    </alternativeName>
</protein>
<reference key="1">
    <citation type="journal article" date="1985" name="J. Biol. Chem.">
        <title>Primary structure of sarcotoxin I, an antibacterial protein induced in the hemolymph of Sarcophaga peregrina (flesh fly) larvae.</title>
        <authorList>
            <person name="Okada M."/>
            <person name="Natori S."/>
        </authorList>
    </citation>
    <scope>PROTEIN SEQUENCE</scope>
    <scope>AMIDATION AT ARG-39</scope>
</reference>
<name>SRX1C_SARPE</name>
<accession>P08377</accession>
<organism>
    <name type="scientific">Sarcophaga peregrina</name>
    <name type="common">Flesh fly</name>
    <name type="synonym">Boettcherisca peregrina</name>
    <dbReference type="NCBI Taxonomy" id="7386"/>
    <lineage>
        <taxon>Eukaryota</taxon>
        <taxon>Metazoa</taxon>
        <taxon>Ecdysozoa</taxon>
        <taxon>Arthropoda</taxon>
        <taxon>Hexapoda</taxon>
        <taxon>Insecta</taxon>
        <taxon>Pterygota</taxon>
        <taxon>Neoptera</taxon>
        <taxon>Endopterygota</taxon>
        <taxon>Diptera</taxon>
        <taxon>Brachycera</taxon>
        <taxon>Muscomorpha</taxon>
        <taxon>Oestroidea</taxon>
        <taxon>Sarcophagidae</taxon>
        <taxon>Sarcophaga</taxon>
        <taxon>Boettcherisca</taxon>
    </lineage>
</organism>